<sequence>MSDDNAQHSDKENKKGFFSILLSQIFHDEPKNKEELLTLIKYSEENELIDRETGHMLEGVIHITKQKIRDIMIPRPQMITLKLTYSLEQCLDVITKSLHSRFPVMSENENYVEGFLITKDLLPFIKNNTEMFCIKKILRPAIVVPESKHVNHMLKEFRLTKNHMAIVIDEFGVVSGLVTIEDILELIVGNIEDEYDETKKNICQLNQSTFIIKSLTSIKEFNETFNTNFNDEEVDTIGGLVMKKIGHLPIRGEYININQYKFKIHIANNRRIILLQVTIPKK</sequence>
<name>CORC_BUCBP</name>
<gene>
    <name type="primary">corC</name>
    <name type="ordered locus">bbp_394</name>
</gene>
<organism>
    <name type="scientific">Buchnera aphidicola subsp. Baizongia pistaciae (strain Bp)</name>
    <dbReference type="NCBI Taxonomy" id="224915"/>
    <lineage>
        <taxon>Bacteria</taxon>
        <taxon>Pseudomonadati</taxon>
        <taxon>Pseudomonadota</taxon>
        <taxon>Gammaproteobacteria</taxon>
        <taxon>Enterobacterales</taxon>
        <taxon>Erwiniaceae</taxon>
        <taxon>Buchnera</taxon>
    </lineage>
</organism>
<evidence type="ECO:0000250" key="1"/>
<evidence type="ECO:0000255" key="2">
    <source>
        <dbReference type="PROSITE-ProRule" id="PRU00703"/>
    </source>
</evidence>
<evidence type="ECO:0000305" key="3"/>
<dbReference type="EMBL" id="AE016826">
    <property type="protein sequence ID" value="AAO27106.1"/>
    <property type="molecule type" value="Genomic_DNA"/>
</dbReference>
<dbReference type="RefSeq" id="WP_011091507.1">
    <property type="nucleotide sequence ID" value="NC_004545.1"/>
</dbReference>
<dbReference type="SMR" id="Q89AC1"/>
<dbReference type="STRING" id="224915.bbp_394"/>
<dbReference type="KEGG" id="bab:bbp_394"/>
<dbReference type="eggNOG" id="COG4535">
    <property type="taxonomic scope" value="Bacteria"/>
</dbReference>
<dbReference type="HOGENOM" id="CLU_015237_3_0_6"/>
<dbReference type="OrthoDB" id="9797674at2"/>
<dbReference type="Proteomes" id="UP000000601">
    <property type="component" value="Chromosome"/>
</dbReference>
<dbReference type="GO" id="GO:0005886">
    <property type="term" value="C:plasma membrane"/>
    <property type="evidence" value="ECO:0007669"/>
    <property type="project" value="TreeGrafter"/>
</dbReference>
<dbReference type="GO" id="GO:0050660">
    <property type="term" value="F:flavin adenine dinucleotide binding"/>
    <property type="evidence" value="ECO:0007669"/>
    <property type="project" value="InterPro"/>
</dbReference>
<dbReference type="CDD" id="cd04590">
    <property type="entry name" value="CBS_pair_CorC_HlyC_assoc"/>
    <property type="match status" value="1"/>
</dbReference>
<dbReference type="FunFam" id="3.10.580.10:FF:000002">
    <property type="entry name" value="Magnesium/cobalt efflux protein CorC"/>
    <property type="match status" value="1"/>
</dbReference>
<dbReference type="Gene3D" id="3.30.465.10">
    <property type="match status" value="1"/>
</dbReference>
<dbReference type="Gene3D" id="3.10.580.10">
    <property type="entry name" value="CBS-domain"/>
    <property type="match status" value="1"/>
</dbReference>
<dbReference type="InterPro" id="IPR000644">
    <property type="entry name" value="CBS_dom"/>
</dbReference>
<dbReference type="InterPro" id="IPR046342">
    <property type="entry name" value="CBS_dom_sf"/>
</dbReference>
<dbReference type="InterPro" id="IPR054115">
    <property type="entry name" value="CorC_N"/>
</dbReference>
<dbReference type="InterPro" id="IPR036318">
    <property type="entry name" value="FAD-bd_PCMH-like_sf"/>
</dbReference>
<dbReference type="InterPro" id="IPR016169">
    <property type="entry name" value="FAD-bd_PCMH_sub2"/>
</dbReference>
<dbReference type="InterPro" id="IPR044751">
    <property type="entry name" value="Ion_transp-like_CBS"/>
</dbReference>
<dbReference type="InterPro" id="IPR005170">
    <property type="entry name" value="Transptr-assoc_dom"/>
</dbReference>
<dbReference type="NCBIfam" id="NF011675">
    <property type="entry name" value="PRK15094.1"/>
    <property type="match status" value="1"/>
</dbReference>
<dbReference type="PANTHER" id="PTHR22777">
    <property type="entry name" value="HEMOLYSIN-RELATED"/>
    <property type="match status" value="1"/>
</dbReference>
<dbReference type="PANTHER" id="PTHR22777:SF27">
    <property type="entry name" value="MAGNESIUM AND COBALT EFFLUX PROTEIN CORC"/>
    <property type="match status" value="1"/>
</dbReference>
<dbReference type="Pfam" id="PF00571">
    <property type="entry name" value="CBS"/>
    <property type="match status" value="2"/>
</dbReference>
<dbReference type="Pfam" id="PF03471">
    <property type="entry name" value="CorC_HlyC"/>
    <property type="match status" value="1"/>
</dbReference>
<dbReference type="Pfam" id="PF21917">
    <property type="entry name" value="NMB0537_N"/>
    <property type="match status" value="1"/>
</dbReference>
<dbReference type="SMART" id="SM01091">
    <property type="entry name" value="CorC_HlyC"/>
    <property type="match status" value="1"/>
</dbReference>
<dbReference type="SUPFAM" id="SSF54631">
    <property type="entry name" value="CBS-domain pair"/>
    <property type="match status" value="1"/>
</dbReference>
<dbReference type="SUPFAM" id="SSF56176">
    <property type="entry name" value="FAD-binding/transporter-associated domain-like"/>
    <property type="match status" value="1"/>
</dbReference>
<dbReference type="PROSITE" id="PS51371">
    <property type="entry name" value="CBS"/>
    <property type="match status" value="2"/>
</dbReference>
<reference key="1">
    <citation type="journal article" date="2003" name="Proc. Natl. Acad. Sci. U.S.A.">
        <title>Reductive genome evolution in Buchnera aphidicola.</title>
        <authorList>
            <person name="van Ham R.C.H.J."/>
            <person name="Kamerbeek J."/>
            <person name="Palacios C."/>
            <person name="Rausell C."/>
            <person name="Abascal F."/>
            <person name="Bastolla U."/>
            <person name="Fernandez J.M."/>
            <person name="Jimenez L."/>
            <person name="Postigo M."/>
            <person name="Silva F.J."/>
            <person name="Tamames J."/>
            <person name="Viguera E."/>
            <person name="Latorre A."/>
            <person name="Valencia A."/>
            <person name="Moran F."/>
            <person name="Moya A."/>
        </authorList>
    </citation>
    <scope>NUCLEOTIDE SEQUENCE [LARGE SCALE GENOMIC DNA]</scope>
    <source>
        <strain>Bp</strain>
    </source>
</reference>
<accession>Q89AC1</accession>
<keyword id="KW-0129">CBS domain</keyword>
<keyword id="KW-0170">Cobalt</keyword>
<keyword id="KW-0460">Magnesium</keyword>
<keyword id="KW-1185">Reference proteome</keyword>
<keyword id="KW-0677">Repeat</keyword>
<keyword id="KW-0813">Transport</keyword>
<proteinExistence type="inferred from homology"/>
<feature type="chain" id="PRO_0000088344" description="Magnesium and cobalt efflux protein CorC">
    <location>
        <begin position="1"/>
        <end position="282"/>
    </location>
</feature>
<feature type="domain" description="CBS 1" evidence="2">
    <location>
        <begin position="72"/>
        <end position="131"/>
    </location>
</feature>
<feature type="domain" description="CBS 2" evidence="2">
    <location>
        <begin position="137"/>
        <end position="194"/>
    </location>
</feature>
<comment type="function">
    <text evidence="1">Plays a role in the transport of magnesium and cobalt ions.</text>
</comment>
<comment type="similarity">
    <text evidence="3">Belongs to the UPF0053 family.</text>
</comment>
<protein>
    <recommendedName>
        <fullName>Magnesium and cobalt efflux protein CorC</fullName>
    </recommendedName>
</protein>